<accession>Q9Y9D9</accession>
<dbReference type="EC" id="4.1.1.23" evidence="1"/>
<dbReference type="EMBL" id="BA000002">
    <property type="protein sequence ID" value="BAA81361.1"/>
    <property type="molecule type" value="Genomic_DNA"/>
</dbReference>
<dbReference type="PIR" id="A72463">
    <property type="entry name" value="A72463"/>
</dbReference>
<dbReference type="RefSeq" id="WP_010866956.1">
    <property type="nucleotide sequence ID" value="NC_000854.2"/>
</dbReference>
<dbReference type="SMR" id="Q9Y9D9"/>
<dbReference type="STRING" id="272557.APE_2348"/>
<dbReference type="EnsemblBacteria" id="BAA81361">
    <property type="protein sequence ID" value="BAA81361"/>
    <property type="gene ID" value="APE_2348"/>
</dbReference>
<dbReference type="GeneID" id="1445366"/>
<dbReference type="KEGG" id="ape:APE_2348"/>
<dbReference type="PATRIC" id="fig|272557.25.peg.1569"/>
<dbReference type="eggNOG" id="arCOG00081">
    <property type="taxonomic scope" value="Archaea"/>
</dbReference>
<dbReference type="UniPathway" id="UPA00070">
    <property type="reaction ID" value="UER00120"/>
</dbReference>
<dbReference type="Proteomes" id="UP000002518">
    <property type="component" value="Chromosome"/>
</dbReference>
<dbReference type="GO" id="GO:0005829">
    <property type="term" value="C:cytosol"/>
    <property type="evidence" value="ECO:0007669"/>
    <property type="project" value="TreeGrafter"/>
</dbReference>
<dbReference type="GO" id="GO:0004590">
    <property type="term" value="F:orotidine-5'-phosphate decarboxylase activity"/>
    <property type="evidence" value="ECO:0007669"/>
    <property type="project" value="UniProtKB-UniRule"/>
</dbReference>
<dbReference type="GO" id="GO:0006207">
    <property type="term" value="P:'de novo' pyrimidine nucleobase biosynthetic process"/>
    <property type="evidence" value="ECO:0007669"/>
    <property type="project" value="InterPro"/>
</dbReference>
<dbReference type="GO" id="GO:0044205">
    <property type="term" value="P:'de novo' UMP biosynthetic process"/>
    <property type="evidence" value="ECO:0007669"/>
    <property type="project" value="UniProtKB-UniRule"/>
</dbReference>
<dbReference type="CDD" id="cd04725">
    <property type="entry name" value="OMP_decarboxylase_like"/>
    <property type="match status" value="1"/>
</dbReference>
<dbReference type="Gene3D" id="3.20.20.70">
    <property type="entry name" value="Aldolase class I"/>
    <property type="match status" value="1"/>
</dbReference>
<dbReference type="HAMAP" id="MF_01200_A">
    <property type="entry name" value="OMPdecase_type1_A"/>
    <property type="match status" value="1"/>
</dbReference>
<dbReference type="InterPro" id="IPR013785">
    <property type="entry name" value="Aldolase_TIM"/>
</dbReference>
<dbReference type="InterPro" id="IPR014732">
    <property type="entry name" value="OMPdecase"/>
</dbReference>
<dbReference type="InterPro" id="IPR047595">
    <property type="entry name" value="OMPdecase_arc"/>
</dbReference>
<dbReference type="InterPro" id="IPR001754">
    <property type="entry name" value="OMPdeCOase_dom"/>
</dbReference>
<dbReference type="InterPro" id="IPR011060">
    <property type="entry name" value="RibuloseP-bd_barrel"/>
</dbReference>
<dbReference type="PANTHER" id="PTHR32119">
    <property type="entry name" value="OROTIDINE 5'-PHOSPHATE DECARBOXYLASE"/>
    <property type="match status" value="1"/>
</dbReference>
<dbReference type="PANTHER" id="PTHR32119:SF2">
    <property type="entry name" value="OROTIDINE 5'-PHOSPHATE DECARBOXYLASE"/>
    <property type="match status" value="1"/>
</dbReference>
<dbReference type="Pfam" id="PF00215">
    <property type="entry name" value="OMPdecase"/>
    <property type="match status" value="1"/>
</dbReference>
<dbReference type="SMART" id="SM00934">
    <property type="entry name" value="OMPdecase"/>
    <property type="match status" value="1"/>
</dbReference>
<dbReference type="SUPFAM" id="SSF51366">
    <property type="entry name" value="Ribulose-phoshate binding barrel"/>
    <property type="match status" value="1"/>
</dbReference>
<comment type="function">
    <text evidence="1">Catalyzes the decarboxylation of orotidine 5'-monophosphate (OMP) to uridine 5'-monophosphate (UMP).</text>
</comment>
<comment type="catalytic activity">
    <reaction evidence="1">
        <text>orotidine 5'-phosphate + H(+) = UMP + CO2</text>
        <dbReference type="Rhea" id="RHEA:11596"/>
        <dbReference type="ChEBI" id="CHEBI:15378"/>
        <dbReference type="ChEBI" id="CHEBI:16526"/>
        <dbReference type="ChEBI" id="CHEBI:57538"/>
        <dbReference type="ChEBI" id="CHEBI:57865"/>
        <dbReference type="EC" id="4.1.1.23"/>
    </reaction>
</comment>
<comment type="pathway">
    <text evidence="1">Pyrimidine metabolism; UMP biosynthesis via de novo pathway; UMP from orotate: step 2/2.</text>
</comment>
<comment type="subunit">
    <text evidence="1">Homodimer.</text>
</comment>
<comment type="similarity">
    <text evidence="1">Belongs to the OMP decarboxylase family. Type 1 subfamily.</text>
</comment>
<sequence length="244" mass="25126">MDPPAVGEAVKRVIVALDPARRGDVDRLLDMARLVCGVGAGIKVGLPMLALGGSEALAEAARLCKGGGLRVLDLKLADIGYIMRLAAESLSRGFDAAIAHAFVGYEGGLVELKKTLDGLGARLVLVVSMSHPGSREVLDPCLDKLLAVARRVEPWGVVAPATRPEVVARVRETLPTTVILSPGVGAQGGKPGDAICLGGADYEIVGRMVAGSPDPVSALRGVAEYIAARCPEKLLHSSTGNGPS</sequence>
<evidence type="ECO:0000255" key="1">
    <source>
        <dbReference type="HAMAP-Rule" id="MF_01200"/>
    </source>
</evidence>
<name>PYRF_AERPE</name>
<feature type="chain" id="PRO_0000134607" description="Orotidine 5'-phosphate decarboxylase">
    <location>
        <begin position="1"/>
        <end position="244"/>
    </location>
</feature>
<feature type="active site" description="Proton donor" evidence="1">
    <location>
        <position position="75"/>
    </location>
</feature>
<feature type="binding site" evidence="1">
    <location>
        <position position="18"/>
    </location>
    <ligand>
        <name>substrate</name>
    </ligand>
</feature>
<feature type="binding site" evidence="1">
    <location>
        <position position="43"/>
    </location>
    <ligand>
        <name>substrate</name>
    </ligand>
</feature>
<feature type="binding site" evidence="1">
    <location>
        <begin position="73"/>
        <end position="82"/>
    </location>
    <ligand>
        <name>substrate</name>
    </ligand>
</feature>
<feature type="binding site" evidence="1">
    <location>
        <position position="130"/>
    </location>
    <ligand>
        <name>substrate</name>
    </ligand>
</feature>
<feature type="binding site" evidence="1">
    <location>
        <begin position="182"/>
        <end position="192"/>
    </location>
    <ligand>
        <name>substrate</name>
    </ligand>
</feature>
<feature type="binding site" evidence="1">
    <location>
        <position position="206"/>
    </location>
    <ligand>
        <name>substrate</name>
    </ligand>
</feature>
<feature type="binding site" evidence="1">
    <location>
        <position position="207"/>
    </location>
    <ligand>
        <name>substrate</name>
    </ligand>
</feature>
<gene>
    <name evidence="1" type="primary">pyrF</name>
    <name type="ordered locus">APE_2348</name>
</gene>
<reference key="1">
    <citation type="journal article" date="1999" name="DNA Res.">
        <title>Complete genome sequence of an aerobic hyper-thermophilic crenarchaeon, Aeropyrum pernix K1.</title>
        <authorList>
            <person name="Kawarabayasi Y."/>
            <person name="Hino Y."/>
            <person name="Horikawa H."/>
            <person name="Yamazaki S."/>
            <person name="Haikawa Y."/>
            <person name="Jin-no K."/>
            <person name="Takahashi M."/>
            <person name="Sekine M."/>
            <person name="Baba S."/>
            <person name="Ankai A."/>
            <person name="Kosugi H."/>
            <person name="Hosoyama A."/>
            <person name="Fukui S."/>
            <person name="Nagai Y."/>
            <person name="Nishijima K."/>
            <person name="Nakazawa H."/>
            <person name="Takamiya M."/>
            <person name="Masuda S."/>
            <person name="Funahashi T."/>
            <person name="Tanaka T."/>
            <person name="Kudoh Y."/>
            <person name="Yamazaki J."/>
            <person name="Kushida N."/>
            <person name="Oguchi A."/>
            <person name="Aoki K."/>
            <person name="Kubota K."/>
            <person name="Nakamura Y."/>
            <person name="Nomura N."/>
            <person name="Sako Y."/>
            <person name="Kikuchi H."/>
        </authorList>
    </citation>
    <scope>NUCLEOTIDE SEQUENCE [LARGE SCALE GENOMIC DNA]</scope>
    <source>
        <strain>ATCC 700893 / DSM 11879 / JCM 9820 / NBRC 100138 / K1</strain>
    </source>
</reference>
<keyword id="KW-0210">Decarboxylase</keyword>
<keyword id="KW-0456">Lyase</keyword>
<keyword id="KW-0665">Pyrimidine biosynthesis</keyword>
<keyword id="KW-1185">Reference proteome</keyword>
<protein>
    <recommendedName>
        <fullName evidence="1">Orotidine 5'-phosphate decarboxylase</fullName>
        <ecNumber evidence="1">4.1.1.23</ecNumber>
    </recommendedName>
    <alternativeName>
        <fullName evidence="1">OMP decarboxylase</fullName>
        <shortName evidence="1">OMPDCase</shortName>
        <shortName evidence="1">OMPdecase</shortName>
    </alternativeName>
</protein>
<organism>
    <name type="scientific">Aeropyrum pernix (strain ATCC 700893 / DSM 11879 / JCM 9820 / NBRC 100138 / K1)</name>
    <dbReference type="NCBI Taxonomy" id="272557"/>
    <lineage>
        <taxon>Archaea</taxon>
        <taxon>Thermoproteota</taxon>
        <taxon>Thermoprotei</taxon>
        <taxon>Desulfurococcales</taxon>
        <taxon>Desulfurococcaceae</taxon>
        <taxon>Aeropyrum</taxon>
    </lineage>
</organism>
<proteinExistence type="inferred from homology"/>